<evidence type="ECO:0000255" key="1">
    <source>
        <dbReference type="HAMAP-Rule" id="MF_00281"/>
    </source>
</evidence>
<proteinExistence type="inferred from homology"/>
<keyword id="KW-0030">Aminoacyl-tRNA synthetase</keyword>
<keyword id="KW-0067">ATP-binding</keyword>
<keyword id="KW-0963">Cytoplasm</keyword>
<keyword id="KW-0436">Ligase</keyword>
<keyword id="KW-0460">Magnesium</keyword>
<keyword id="KW-0479">Metal-binding</keyword>
<keyword id="KW-0547">Nucleotide-binding</keyword>
<keyword id="KW-0648">Protein biosynthesis</keyword>
<dbReference type="EC" id="6.1.1.20" evidence="1"/>
<dbReference type="EMBL" id="CU459141">
    <property type="protein sequence ID" value="CAM87969.1"/>
    <property type="molecule type" value="Genomic_DNA"/>
</dbReference>
<dbReference type="SMR" id="B0V5Q6"/>
<dbReference type="EnsemblBacteria" id="CAM87969">
    <property type="protein sequence ID" value="CAM87969"/>
    <property type="gene ID" value="ABAYE3160"/>
</dbReference>
<dbReference type="KEGG" id="aby:ABAYE3160"/>
<dbReference type="HOGENOM" id="CLU_025086_0_1_6"/>
<dbReference type="GO" id="GO:0005737">
    <property type="term" value="C:cytoplasm"/>
    <property type="evidence" value="ECO:0007669"/>
    <property type="project" value="UniProtKB-SubCell"/>
</dbReference>
<dbReference type="GO" id="GO:0005524">
    <property type="term" value="F:ATP binding"/>
    <property type="evidence" value="ECO:0007669"/>
    <property type="project" value="UniProtKB-UniRule"/>
</dbReference>
<dbReference type="GO" id="GO:0000287">
    <property type="term" value="F:magnesium ion binding"/>
    <property type="evidence" value="ECO:0007669"/>
    <property type="project" value="UniProtKB-UniRule"/>
</dbReference>
<dbReference type="GO" id="GO:0004826">
    <property type="term" value="F:phenylalanine-tRNA ligase activity"/>
    <property type="evidence" value="ECO:0007669"/>
    <property type="project" value="UniProtKB-UniRule"/>
</dbReference>
<dbReference type="GO" id="GO:0000049">
    <property type="term" value="F:tRNA binding"/>
    <property type="evidence" value="ECO:0007669"/>
    <property type="project" value="InterPro"/>
</dbReference>
<dbReference type="GO" id="GO:0006432">
    <property type="term" value="P:phenylalanyl-tRNA aminoacylation"/>
    <property type="evidence" value="ECO:0007669"/>
    <property type="project" value="UniProtKB-UniRule"/>
</dbReference>
<dbReference type="CDD" id="cd00496">
    <property type="entry name" value="PheRS_alpha_core"/>
    <property type="match status" value="1"/>
</dbReference>
<dbReference type="FunFam" id="3.30.930.10:FF:000003">
    <property type="entry name" value="Phenylalanine--tRNA ligase alpha subunit"/>
    <property type="match status" value="1"/>
</dbReference>
<dbReference type="Gene3D" id="3.30.930.10">
    <property type="entry name" value="Bira Bifunctional Protein, Domain 2"/>
    <property type="match status" value="1"/>
</dbReference>
<dbReference type="HAMAP" id="MF_00281">
    <property type="entry name" value="Phe_tRNA_synth_alpha1"/>
    <property type="match status" value="1"/>
</dbReference>
<dbReference type="InterPro" id="IPR006195">
    <property type="entry name" value="aa-tRNA-synth_II"/>
</dbReference>
<dbReference type="InterPro" id="IPR045864">
    <property type="entry name" value="aa-tRNA-synth_II/BPL/LPL"/>
</dbReference>
<dbReference type="InterPro" id="IPR004529">
    <property type="entry name" value="Phe-tRNA-synth_IIc_asu"/>
</dbReference>
<dbReference type="InterPro" id="IPR004188">
    <property type="entry name" value="Phe-tRNA_ligase_II_N"/>
</dbReference>
<dbReference type="InterPro" id="IPR022911">
    <property type="entry name" value="Phe_tRNA_ligase_alpha1_bac"/>
</dbReference>
<dbReference type="InterPro" id="IPR002319">
    <property type="entry name" value="Phenylalanyl-tRNA_Synthase"/>
</dbReference>
<dbReference type="InterPro" id="IPR010978">
    <property type="entry name" value="tRNA-bd_arm"/>
</dbReference>
<dbReference type="NCBIfam" id="TIGR00468">
    <property type="entry name" value="pheS"/>
    <property type="match status" value="1"/>
</dbReference>
<dbReference type="PANTHER" id="PTHR11538:SF41">
    <property type="entry name" value="PHENYLALANINE--TRNA LIGASE, MITOCHONDRIAL"/>
    <property type="match status" value="1"/>
</dbReference>
<dbReference type="PANTHER" id="PTHR11538">
    <property type="entry name" value="PHENYLALANYL-TRNA SYNTHETASE"/>
    <property type="match status" value="1"/>
</dbReference>
<dbReference type="Pfam" id="PF02912">
    <property type="entry name" value="Phe_tRNA-synt_N"/>
    <property type="match status" value="1"/>
</dbReference>
<dbReference type="Pfam" id="PF01409">
    <property type="entry name" value="tRNA-synt_2d"/>
    <property type="match status" value="1"/>
</dbReference>
<dbReference type="SUPFAM" id="SSF55681">
    <property type="entry name" value="Class II aaRS and biotin synthetases"/>
    <property type="match status" value="1"/>
</dbReference>
<dbReference type="SUPFAM" id="SSF46589">
    <property type="entry name" value="tRNA-binding arm"/>
    <property type="match status" value="1"/>
</dbReference>
<dbReference type="PROSITE" id="PS50862">
    <property type="entry name" value="AA_TRNA_LIGASE_II"/>
    <property type="match status" value="1"/>
</dbReference>
<name>SYFA_ACIBY</name>
<protein>
    <recommendedName>
        <fullName evidence="1">Phenylalanine--tRNA ligase alpha subunit</fullName>
        <ecNumber evidence="1">6.1.1.20</ecNumber>
    </recommendedName>
    <alternativeName>
        <fullName evidence="1">Phenylalanyl-tRNA synthetase alpha subunit</fullName>
        <shortName evidence="1">PheRS</shortName>
    </alternativeName>
</protein>
<gene>
    <name evidence="1" type="primary">pheS</name>
    <name type="ordered locus">ABAYE3160</name>
</gene>
<accession>B0V5Q6</accession>
<organism>
    <name type="scientific">Acinetobacter baumannii (strain AYE)</name>
    <dbReference type="NCBI Taxonomy" id="509173"/>
    <lineage>
        <taxon>Bacteria</taxon>
        <taxon>Pseudomonadati</taxon>
        <taxon>Pseudomonadota</taxon>
        <taxon>Gammaproteobacteria</taxon>
        <taxon>Moraxellales</taxon>
        <taxon>Moraxellaceae</taxon>
        <taxon>Acinetobacter</taxon>
        <taxon>Acinetobacter calcoaceticus/baumannii complex</taxon>
    </lineage>
</organism>
<feature type="chain" id="PRO_1000114840" description="Phenylalanine--tRNA ligase alpha subunit">
    <location>
        <begin position="1"/>
        <end position="330"/>
    </location>
</feature>
<feature type="binding site" evidence="1">
    <location>
        <position position="255"/>
    </location>
    <ligand>
        <name>Mg(2+)</name>
        <dbReference type="ChEBI" id="CHEBI:18420"/>
        <note>shared with beta subunit</note>
    </ligand>
</feature>
<sequence length="330" mass="37105">MRVTMSLEALTTEALAAIAAAQDLVALDQVRVQFTGKKSQLAEQSKALGKMDPEERKVQGAAIHAVRETINNALTERQTALQQAALAQKLASETIDITLPGRGQCVGTVHPVTQVQERICQFFTKAGFTVATGPEVEDDYHNFEALNIPGHHPARAMHDTFYFDANHLLRTHTSGVQIRTMETSQPPIRIVCPGRVYRCDSDQTHSPMFHQIEGLYVAENTSFAELKGLLINLLNEFFEKDLKVRFRPSYFPFTEPSAEVDIMDERGRWLEVLGCGMVHPNVLRAAGIDPDKYKGFAFGLGVERFAMLRYGINDLRMFYQNDVRFLRQFA</sequence>
<reference key="1">
    <citation type="journal article" date="2008" name="PLoS ONE">
        <title>Comparative analysis of Acinetobacters: three genomes for three lifestyles.</title>
        <authorList>
            <person name="Vallenet D."/>
            <person name="Nordmann P."/>
            <person name="Barbe V."/>
            <person name="Poirel L."/>
            <person name="Mangenot S."/>
            <person name="Bataille E."/>
            <person name="Dossat C."/>
            <person name="Gas S."/>
            <person name="Kreimeyer A."/>
            <person name="Lenoble P."/>
            <person name="Oztas S."/>
            <person name="Poulain J."/>
            <person name="Segurens B."/>
            <person name="Robert C."/>
            <person name="Abergel C."/>
            <person name="Claverie J.-M."/>
            <person name="Raoult D."/>
            <person name="Medigue C."/>
            <person name="Weissenbach J."/>
            <person name="Cruveiller S."/>
        </authorList>
    </citation>
    <scope>NUCLEOTIDE SEQUENCE [LARGE SCALE GENOMIC DNA]</scope>
    <source>
        <strain>AYE</strain>
    </source>
</reference>
<comment type="catalytic activity">
    <reaction evidence="1">
        <text>tRNA(Phe) + L-phenylalanine + ATP = L-phenylalanyl-tRNA(Phe) + AMP + diphosphate + H(+)</text>
        <dbReference type="Rhea" id="RHEA:19413"/>
        <dbReference type="Rhea" id="RHEA-COMP:9668"/>
        <dbReference type="Rhea" id="RHEA-COMP:9699"/>
        <dbReference type="ChEBI" id="CHEBI:15378"/>
        <dbReference type="ChEBI" id="CHEBI:30616"/>
        <dbReference type="ChEBI" id="CHEBI:33019"/>
        <dbReference type="ChEBI" id="CHEBI:58095"/>
        <dbReference type="ChEBI" id="CHEBI:78442"/>
        <dbReference type="ChEBI" id="CHEBI:78531"/>
        <dbReference type="ChEBI" id="CHEBI:456215"/>
        <dbReference type="EC" id="6.1.1.20"/>
    </reaction>
</comment>
<comment type="cofactor">
    <cofactor evidence="1">
        <name>Mg(2+)</name>
        <dbReference type="ChEBI" id="CHEBI:18420"/>
    </cofactor>
    <text evidence="1">Binds 2 magnesium ions per tetramer.</text>
</comment>
<comment type="subunit">
    <text evidence="1">Tetramer of two alpha and two beta subunits.</text>
</comment>
<comment type="subcellular location">
    <subcellularLocation>
        <location evidence="1">Cytoplasm</location>
    </subcellularLocation>
</comment>
<comment type="similarity">
    <text evidence="1">Belongs to the class-II aminoacyl-tRNA synthetase family. Phe-tRNA synthetase alpha subunit type 1 subfamily.</text>
</comment>